<name>PYRB_CROS8</name>
<sequence>MANPLYQKHIISINDLSRAELELVLETAAKLKANPQPELLKHKVIASCFFEASTRTRLSFETSMHRLGAAVVGFSDSSNTSLGKKGETLADTISVISTYVDAIVMRHPQEGAARLATEFSGGVPVLNAGDGANQHPTQTLLDLFTIQETQGRLENLTIAMVGDLKYGRTVHSLAQALAKFNGNRFCFIAPDALAMPQYILDMLDEKGIPWSLHSAIEDVVQEVDILYMTRVQKERLDPSEYANVKAQFVLRAADLQGARANMKVLHPLPRIDEITTDVDKTPHAWYFQQAGNGIFARQALLALVLNRDLAL</sequence>
<comment type="function">
    <text evidence="1">Catalyzes the condensation of carbamoyl phosphate and aspartate to form carbamoyl aspartate and inorganic phosphate, the committed step in the de novo pyrimidine nucleotide biosynthesis pathway.</text>
</comment>
<comment type="catalytic activity">
    <reaction evidence="1">
        <text>carbamoyl phosphate + L-aspartate = N-carbamoyl-L-aspartate + phosphate + H(+)</text>
        <dbReference type="Rhea" id="RHEA:20013"/>
        <dbReference type="ChEBI" id="CHEBI:15378"/>
        <dbReference type="ChEBI" id="CHEBI:29991"/>
        <dbReference type="ChEBI" id="CHEBI:32814"/>
        <dbReference type="ChEBI" id="CHEBI:43474"/>
        <dbReference type="ChEBI" id="CHEBI:58228"/>
        <dbReference type="EC" id="2.1.3.2"/>
    </reaction>
</comment>
<comment type="pathway">
    <text evidence="1">Pyrimidine metabolism; UMP biosynthesis via de novo pathway; (S)-dihydroorotate from bicarbonate: step 2/3.</text>
</comment>
<comment type="subunit">
    <text evidence="1">Heterododecamer (2C3:3R2) of six catalytic PyrB chains organized as two trimers (C3), and six regulatory PyrI chains organized as three dimers (R2).</text>
</comment>
<comment type="similarity">
    <text evidence="1">Belongs to the aspartate/ornithine carbamoyltransferase superfamily. ATCase family.</text>
</comment>
<protein>
    <recommendedName>
        <fullName evidence="1">Aspartate carbamoyltransferase catalytic subunit</fullName>
        <ecNumber evidence="1">2.1.3.2</ecNumber>
    </recommendedName>
    <alternativeName>
        <fullName evidence="1">Aspartate transcarbamylase</fullName>
        <shortName evidence="1">ATCase</shortName>
    </alternativeName>
</protein>
<organism>
    <name type="scientific">Cronobacter sakazakii (strain ATCC BAA-894)</name>
    <name type="common">Enterobacter sakazakii</name>
    <dbReference type="NCBI Taxonomy" id="290339"/>
    <lineage>
        <taxon>Bacteria</taxon>
        <taxon>Pseudomonadati</taxon>
        <taxon>Pseudomonadota</taxon>
        <taxon>Gammaproteobacteria</taxon>
        <taxon>Enterobacterales</taxon>
        <taxon>Enterobacteriaceae</taxon>
        <taxon>Cronobacter</taxon>
    </lineage>
</organism>
<feature type="chain" id="PRO_1000000008" description="Aspartate carbamoyltransferase catalytic subunit">
    <location>
        <begin position="1"/>
        <end position="311"/>
    </location>
</feature>
<feature type="binding site" evidence="1">
    <location>
        <position position="55"/>
    </location>
    <ligand>
        <name>carbamoyl phosphate</name>
        <dbReference type="ChEBI" id="CHEBI:58228"/>
    </ligand>
</feature>
<feature type="binding site" evidence="1">
    <location>
        <position position="56"/>
    </location>
    <ligand>
        <name>carbamoyl phosphate</name>
        <dbReference type="ChEBI" id="CHEBI:58228"/>
    </ligand>
</feature>
<feature type="binding site" evidence="1">
    <location>
        <position position="85"/>
    </location>
    <ligand>
        <name>L-aspartate</name>
        <dbReference type="ChEBI" id="CHEBI:29991"/>
    </ligand>
</feature>
<feature type="binding site" evidence="1">
    <location>
        <position position="106"/>
    </location>
    <ligand>
        <name>carbamoyl phosphate</name>
        <dbReference type="ChEBI" id="CHEBI:58228"/>
    </ligand>
</feature>
<feature type="binding site" evidence="1">
    <location>
        <position position="135"/>
    </location>
    <ligand>
        <name>carbamoyl phosphate</name>
        <dbReference type="ChEBI" id="CHEBI:58228"/>
    </ligand>
</feature>
<feature type="binding site" evidence="1">
    <location>
        <position position="138"/>
    </location>
    <ligand>
        <name>carbamoyl phosphate</name>
        <dbReference type="ChEBI" id="CHEBI:58228"/>
    </ligand>
</feature>
<feature type="binding site" evidence="1">
    <location>
        <position position="168"/>
    </location>
    <ligand>
        <name>L-aspartate</name>
        <dbReference type="ChEBI" id="CHEBI:29991"/>
    </ligand>
</feature>
<feature type="binding site" evidence="1">
    <location>
        <position position="230"/>
    </location>
    <ligand>
        <name>L-aspartate</name>
        <dbReference type="ChEBI" id="CHEBI:29991"/>
    </ligand>
</feature>
<feature type="binding site" evidence="1">
    <location>
        <position position="268"/>
    </location>
    <ligand>
        <name>carbamoyl phosphate</name>
        <dbReference type="ChEBI" id="CHEBI:58228"/>
    </ligand>
</feature>
<feature type="binding site" evidence="1">
    <location>
        <position position="269"/>
    </location>
    <ligand>
        <name>carbamoyl phosphate</name>
        <dbReference type="ChEBI" id="CHEBI:58228"/>
    </ligand>
</feature>
<reference key="1">
    <citation type="journal article" date="2010" name="PLoS ONE">
        <title>Genome sequence of Cronobacter sakazakii BAA-894 and comparative genomic hybridization analysis with other Cronobacter species.</title>
        <authorList>
            <person name="Kucerova E."/>
            <person name="Clifton S.W."/>
            <person name="Xia X.Q."/>
            <person name="Long F."/>
            <person name="Porwollik S."/>
            <person name="Fulton L."/>
            <person name="Fronick C."/>
            <person name="Minx P."/>
            <person name="Kyung K."/>
            <person name="Warren W."/>
            <person name="Fulton R."/>
            <person name="Feng D."/>
            <person name="Wollam A."/>
            <person name="Shah N."/>
            <person name="Bhonagiri V."/>
            <person name="Nash W.E."/>
            <person name="Hallsworth-Pepin K."/>
            <person name="Wilson R.K."/>
            <person name="McClelland M."/>
            <person name="Forsythe S.J."/>
        </authorList>
    </citation>
    <scope>NUCLEOTIDE SEQUENCE [LARGE SCALE GENOMIC DNA]</scope>
    <source>
        <strain>ATCC BAA-894</strain>
    </source>
</reference>
<accession>A7MQG0</accession>
<keyword id="KW-0665">Pyrimidine biosynthesis</keyword>
<keyword id="KW-1185">Reference proteome</keyword>
<keyword id="KW-0808">Transferase</keyword>
<dbReference type="EC" id="2.1.3.2" evidence="1"/>
<dbReference type="EMBL" id="CP000783">
    <property type="protein sequence ID" value="ABU78696.1"/>
    <property type="molecule type" value="Genomic_DNA"/>
</dbReference>
<dbReference type="RefSeq" id="WP_012125907.1">
    <property type="nucleotide sequence ID" value="NC_009778.1"/>
</dbReference>
<dbReference type="SMR" id="A7MQG0"/>
<dbReference type="GeneID" id="45717017"/>
<dbReference type="KEGG" id="esa:ESA_03481"/>
<dbReference type="HOGENOM" id="CLU_043846_1_2_6"/>
<dbReference type="UniPathway" id="UPA00070">
    <property type="reaction ID" value="UER00116"/>
</dbReference>
<dbReference type="Proteomes" id="UP000000260">
    <property type="component" value="Chromosome"/>
</dbReference>
<dbReference type="GO" id="GO:0005829">
    <property type="term" value="C:cytosol"/>
    <property type="evidence" value="ECO:0007669"/>
    <property type="project" value="TreeGrafter"/>
</dbReference>
<dbReference type="GO" id="GO:0016597">
    <property type="term" value="F:amino acid binding"/>
    <property type="evidence" value="ECO:0007669"/>
    <property type="project" value="InterPro"/>
</dbReference>
<dbReference type="GO" id="GO:0004070">
    <property type="term" value="F:aspartate carbamoyltransferase activity"/>
    <property type="evidence" value="ECO:0007669"/>
    <property type="project" value="UniProtKB-UniRule"/>
</dbReference>
<dbReference type="GO" id="GO:0006207">
    <property type="term" value="P:'de novo' pyrimidine nucleobase biosynthetic process"/>
    <property type="evidence" value="ECO:0007669"/>
    <property type="project" value="InterPro"/>
</dbReference>
<dbReference type="GO" id="GO:0044205">
    <property type="term" value="P:'de novo' UMP biosynthetic process"/>
    <property type="evidence" value="ECO:0007669"/>
    <property type="project" value="UniProtKB-UniRule"/>
</dbReference>
<dbReference type="GO" id="GO:0006520">
    <property type="term" value="P:amino acid metabolic process"/>
    <property type="evidence" value="ECO:0007669"/>
    <property type="project" value="InterPro"/>
</dbReference>
<dbReference type="FunFam" id="3.40.50.1370:FF:000001">
    <property type="entry name" value="Aspartate carbamoyltransferase"/>
    <property type="match status" value="1"/>
</dbReference>
<dbReference type="FunFam" id="3.40.50.1370:FF:000002">
    <property type="entry name" value="Aspartate carbamoyltransferase 2"/>
    <property type="match status" value="1"/>
</dbReference>
<dbReference type="Gene3D" id="3.40.50.1370">
    <property type="entry name" value="Aspartate/ornithine carbamoyltransferase"/>
    <property type="match status" value="2"/>
</dbReference>
<dbReference type="HAMAP" id="MF_00001">
    <property type="entry name" value="Asp_carb_tr"/>
    <property type="match status" value="1"/>
</dbReference>
<dbReference type="InterPro" id="IPR006132">
    <property type="entry name" value="Asp/Orn_carbamoyltranf_P-bd"/>
</dbReference>
<dbReference type="InterPro" id="IPR006130">
    <property type="entry name" value="Asp/Orn_carbamoylTrfase"/>
</dbReference>
<dbReference type="InterPro" id="IPR036901">
    <property type="entry name" value="Asp/Orn_carbamoylTrfase_sf"/>
</dbReference>
<dbReference type="InterPro" id="IPR002082">
    <property type="entry name" value="Asp_carbamoyltransf"/>
</dbReference>
<dbReference type="InterPro" id="IPR006131">
    <property type="entry name" value="Asp_carbamoyltransf_Asp/Orn-bd"/>
</dbReference>
<dbReference type="NCBIfam" id="TIGR00670">
    <property type="entry name" value="asp_carb_tr"/>
    <property type="match status" value="1"/>
</dbReference>
<dbReference type="NCBIfam" id="NF002032">
    <property type="entry name" value="PRK00856.1"/>
    <property type="match status" value="1"/>
</dbReference>
<dbReference type="PANTHER" id="PTHR45753:SF6">
    <property type="entry name" value="ASPARTATE CARBAMOYLTRANSFERASE"/>
    <property type="match status" value="1"/>
</dbReference>
<dbReference type="PANTHER" id="PTHR45753">
    <property type="entry name" value="ORNITHINE CARBAMOYLTRANSFERASE, MITOCHONDRIAL"/>
    <property type="match status" value="1"/>
</dbReference>
<dbReference type="Pfam" id="PF00185">
    <property type="entry name" value="OTCace"/>
    <property type="match status" value="1"/>
</dbReference>
<dbReference type="Pfam" id="PF02729">
    <property type="entry name" value="OTCace_N"/>
    <property type="match status" value="1"/>
</dbReference>
<dbReference type="PRINTS" id="PR00100">
    <property type="entry name" value="AOTCASE"/>
</dbReference>
<dbReference type="PRINTS" id="PR00101">
    <property type="entry name" value="ATCASE"/>
</dbReference>
<dbReference type="SUPFAM" id="SSF53671">
    <property type="entry name" value="Aspartate/ornithine carbamoyltransferase"/>
    <property type="match status" value="1"/>
</dbReference>
<dbReference type="PROSITE" id="PS00097">
    <property type="entry name" value="CARBAMOYLTRANSFERASE"/>
    <property type="match status" value="1"/>
</dbReference>
<evidence type="ECO:0000255" key="1">
    <source>
        <dbReference type="HAMAP-Rule" id="MF_00001"/>
    </source>
</evidence>
<proteinExistence type="inferred from homology"/>
<gene>
    <name evidence="1" type="primary">pyrB</name>
    <name type="ordered locus">ESA_03481</name>
</gene>